<proteinExistence type="inferred from homology"/>
<accession>C1DLJ1</accession>
<evidence type="ECO:0000255" key="1">
    <source>
        <dbReference type="HAMAP-Rule" id="MF_00139"/>
    </source>
</evidence>
<evidence type="ECO:0000255" key="2">
    <source>
        <dbReference type="PROSITE-ProRule" id="PRU01202"/>
    </source>
</evidence>
<gene>
    <name evidence="1" type="primary">purH</name>
    <name type="ordered locus">Avin_06890</name>
</gene>
<reference key="1">
    <citation type="journal article" date="2009" name="J. Bacteriol.">
        <title>Genome sequence of Azotobacter vinelandii, an obligate aerobe specialized to support diverse anaerobic metabolic processes.</title>
        <authorList>
            <person name="Setubal J.C."/>
            <person name="Dos Santos P."/>
            <person name="Goldman B.S."/>
            <person name="Ertesvaag H."/>
            <person name="Espin G."/>
            <person name="Rubio L.M."/>
            <person name="Valla S."/>
            <person name="Almeida N.F."/>
            <person name="Balasubramanian D."/>
            <person name="Cromes L."/>
            <person name="Curatti L."/>
            <person name="Du Z."/>
            <person name="Godsy E."/>
            <person name="Goodner B."/>
            <person name="Hellner-Burris K."/>
            <person name="Hernandez J.A."/>
            <person name="Houmiel K."/>
            <person name="Imperial J."/>
            <person name="Kennedy C."/>
            <person name="Larson T.J."/>
            <person name="Latreille P."/>
            <person name="Ligon L.S."/>
            <person name="Lu J."/>
            <person name="Maerk M."/>
            <person name="Miller N.M."/>
            <person name="Norton S."/>
            <person name="O'Carroll I.P."/>
            <person name="Paulsen I."/>
            <person name="Raulfs E.C."/>
            <person name="Roemer R."/>
            <person name="Rosser J."/>
            <person name="Segura D."/>
            <person name="Slater S."/>
            <person name="Stricklin S.L."/>
            <person name="Studholme D.J."/>
            <person name="Sun J."/>
            <person name="Viana C.J."/>
            <person name="Wallin E."/>
            <person name="Wang B."/>
            <person name="Wheeler C."/>
            <person name="Zhu H."/>
            <person name="Dean D.R."/>
            <person name="Dixon R."/>
            <person name="Wood D."/>
        </authorList>
    </citation>
    <scope>NUCLEOTIDE SEQUENCE [LARGE SCALE GENOMIC DNA]</scope>
    <source>
        <strain>DJ / ATCC BAA-1303</strain>
    </source>
</reference>
<organism>
    <name type="scientific">Azotobacter vinelandii (strain DJ / ATCC BAA-1303)</name>
    <dbReference type="NCBI Taxonomy" id="322710"/>
    <lineage>
        <taxon>Bacteria</taxon>
        <taxon>Pseudomonadati</taxon>
        <taxon>Pseudomonadota</taxon>
        <taxon>Gammaproteobacteria</taxon>
        <taxon>Pseudomonadales</taxon>
        <taxon>Pseudomonadaceae</taxon>
        <taxon>Azotobacter</taxon>
    </lineage>
</organism>
<feature type="chain" id="PRO_1000203246" description="Bifunctional purine biosynthesis protein PurH">
    <location>
        <begin position="1"/>
        <end position="535"/>
    </location>
</feature>
<feature type="domain" description="MGS-like" evidence="2">
    <location>
        <begin position="6"/>
        <end position="151"/>
    </location>
</feature>
<name>PUR9_AZOVD</name>
<comment type="catalytic activity">
    <reaction evidence="1">
        <text>(6R)-10-formyltetrahydrofolate + 5-amino-1-(5-phospho-beta-D-ribosyl)imidazole-4-carboxamide = 5-formamido-1-(5-phospho-D-ribosyl)imidazole-4-carboxamide + (6S)-5,6,7,8-tetrahydrofolate</text>
        <dbReference type="Rhea" id="RHEA:22192"/>
        <dbReference type="ChEBI" id="CHEBI:57453"/>
        <dbReference type="ChEBI" id="CHEBI:58467"/>
        <dbReference type="ChEBI" id="CHEBI:58475"/>
        <dbReference type="ChEBI" id="CHEBI:195366"/>
        <dbReference type="EC" id="2.1.2.3"/>
    </reaction>
</comment>
<comment type="catalytic activity">
    <reaction evidence="1">
        <text>IMP + H2O = 5-formamido-1-(5-phospho-D-ribosyl)imidazole-4-carboxamide</text>
        <dbReference type="Rhea" id="RHEA:18445"/>
        <dbReference type="ChEBI" id="CHEBI:15377"/>
        <dbReference type="ChEBI" id="CHEBI:58053"/>
        <dbReference type="ChEBI" id="CHEBI:58467"/>
        <dbReference type="EC" id="3.5.4.10"/>
    </reaction>
</comment>
<comment type="pathway">
    <text evidence="1">Purine metabolism; IMP biosynthesis via de novo pathway; 5-formamido-1-(5-phospho-D-ribosyl)imidazole-4-carboxamide from 5-amino-1-(5-phospho-D-ribosyl)imidazole-4-carboxamide (10-formyl THF route): step 1/1.</text>
</comment>
<comment type="pathway">
    <text evidence="1">Purine metabolism; IMP biosynthesis via de novo pathway; IMP from 5-formamido-1-(5-phospho-D-ribosyl)imidazole-4-carboxamide: step 1/1.</text>
</comment>
<comment type="domain">
    <text evidence="1">The IMP cyclohydrolase activity resides in the N-terminal region.</text>
</comment>
<comment type="similarity">
    <text evidence="1">Belongs to the PurH family.</text>
</comment>
<protein>
    <recommendedName>
        <fullName evidence="1">Bifunctional purine biosynthesis protein PurH</fullName>
    </recommendedName>
    <domain>
        <recommendedName>
            <fullName evidence="1">Phosphoribosylaminoimidazolecarboxamide formyltransferase</fullName>
            <ecNumber evidence="1">2.1.2.3</ecNumber>
        </recommendedName>
        <alternativeName>
            <fullName evidence="1">AICAR transformylase</fullName>
        </alternativeName>
    </domain>
    <domain>
        <recommendedName>
            <fullName evidence="1">IMP cyclohydrolase</fullName>
            <ecNumber evidence="1">3.5.4.10</ecNumber>
        </recommendedName>
        <alternativeName>
            <fullName evidence="1">ATIC</fullName>
        </alternativeName>
        <alternativeName>
            <fullName evidence="1">IMP synthase</fullName>
        </alternativeName>
        <alternativeName>
            <fullName evidence="1">Inosinicase</fullName>
        </alternativeName>
    </domain>
</protein>
<sequence length="535" mass="57290">MTDQTTRLPVRRALISVSDKTGVVDFARELAALGVEILSTGGTFKLLREHGVDAVEVADYTGFPEMMDGRVKTLHPKIHGGILGRRDLDAAVMAEHGIQPIDLVAVNLYPFAATVARPGCTLAEAIENIDIGGPTMVRSAAKNHKDVAIVVNAADYAGVLESLKNGGLTYAQRFDLALRAFEHTAAYDGMIANYLGTIDQGAETLTTEGRAAFPRTFNSQFVKAQDMRYGENPHQQAAFYVETSPAEASVATARQLQGKELSYNNVADTDAALECVKSFVKPACVIVKHANPCGVAVVPEDEGGIRKAYDLAYATDSESAFGGIIAFNRELDGATARAIVERQFVEVIIAPSVSAEAREAVAAKANVRLLECGQWPAERADGLDFKRVNGGLLVQSRDIGMIAEADLKVVTRRAPTEREIHDLIFAWKVAKFVKSNAIVYARNRQTIGVGAGQMSRVNSARIAAIKAEHAGLEVAGAVMASDAFFPFRDGIDNAAKAGITAVIQPGGSMRDNEVIAAADEAGMAMVFTGMRHFRH</sequence>
<dbReference type="EC" id="2.1.2.3" evidence="1"/>
<dbReference type="EC" id="3.5.4.10" evidence="1"/>
<dbReference type="EMBL" id="CP001157">
    <property type="protein sequence ID" value="ACO76939.1"/>
    <property type="molecule type" value="Genomic_DNA"/>
</dbReference>
<dbReference type="RefSeq" id="WP_012699364.1">
    <property type="nucleotide sequence ID" value="NC_012560.1"/>
</dbReference>
<dbReference type="SMR" id="C1DLJ1"/>
<dbReference type="STRING" id="322710.Avin_06890"/>
<dbReference type="EnsemblBacteria" id="ACO76939">
    <property type="protein sequence ID" value="ACO76939"/>
    <property type="gene ID" value="Avin_06890"/>
</dbReference>
<dbReference type="GeneID" id="88184097"/>
<dbReference type="KEGG" id="avn:Avin_06890"/>
<dbReference type="eggNOG" id="COG0138">
    <property type="taxonomic scope" value="Bacteria"/>
</dbReference>
<dbReference type="HOGENOM" id="CLU_016316_5_2_6"/>
<dbReference type="OrthoDB" id="9802065at2"/>
<dbReference type="UniPathway" id="UPA00074">
    <property type="reaction ID" value="UER00133"/>
</dbReference>
<dbReference type="UniPathway" id="UPA00074">
    <property type="reaction ID" value="UER00135"/>
</dbReference>
<dbReference type="Proteomes" id="UP000002424">
    <property type="component" value="Chromosome"/>
</dbReference>
<dbReference type="GO" id="GO:0005829">
    <property type="term" value="C:cytosol"/>
    <property type="evidence" value="ECO:0007669"/>
    <property type="project" value="TreeGrafter"/>
</dbReference>
<dbReference type="GO" id="GO:0003937">
    <property type="term" value="F:IMP cyclohydrolase activity"/>
    <property type="evidence" value="ECO:0007669"/>
    <property type="project" value="UniProtKB-UniRule"/>
</dbReference>
<dbReference type="GO" id="GO:0004643">
    <property type="term" value="F:phosphoribosylaminoimidazolecarboxamide formyltransferase activity"/>
    <property type="evidence" value="ECO:0007669"/>
    <property type="project" value="UniProtKB-UniRule"/>
</dbReference>
<dbReference type="GO" id="GO:0006189">
    <property type="term" value="P:'de novo' IMP biosynthetic process"/>
    <property type="evidence" value="ECO:0007669"/>
    <property type="project" value="UniProtKB-UniRule"/>
</dbReference>
<dbReference type="CDD" id="cd01421">
    <property type="entry name" value="IMPCH"/>
    <property type="match status" value="1"/>
</dbReference>
<dbReference type="FunFam" id="3.40.140.20:FF:000001">
    <property type="entry name" value="Bifunctional purine biosynthesis protein PurH"/>
    <property type="match status" value="1"/>
</dbReference>
<dbReference type="FunFam" id="3.40.140.20:FF:000002">
    <property type="entry name" value="Bifunctional purine biosynthesis protein PurH"/>
    <property type="match status" value="1"/>
</dbReference>
<dbReference type="FunFam" id="3.40.50.1380:FF:000001">
    <property type="entry name" value="Bifunctional purine biosynthesis protein PurH"/>
    <property type="match status" value="1"/>
</dbReference>
<dbReference type="Gene3D" id="3.40.140.20">
    <property type="match status" value="2"/>
</dbReference>
<dbReference type="Gene3D" id="3.40.50.1380">
    <property type="entry name" value="Methylglyoxal synthase-like domain"/>
    <property type="match status" value="1"/>
</dbReference>
<dbReference type="HAMAP" id="MF_00139">
    <property type="entry name" value="PurH"/>
    <property type="match status" value="1"/>
</dbReference>
<dbReference type="InterPro" id="IPR024051">
    <property type="entry name" value="AICAR_Tfase_dup_dom_sf"/>
</dbReference>
<dbReference type="InterPro" id="IPR016193">
    <property type="entry name" value="Cytidine_deaminase-like"/>
</dbReference>
<dbReference type="InterPro" id="IPR011607">
    <property type="entry name" value="MGS-like_dom"/>
</dbReference>
<dbReference type="InterPro" id="IPR036914">
    <property type="entry name" value="MGS-like_dom_sf"/>
</dbReference>
<dbReference type="InterPro" id="IPR002695">
    <property type="entry name" value="PurH-like"/>
</dbReference>
<dbReference type="NCBIfam" id="NF002049">
    <property type="entry name" value="PRK00881.1"/>
    <property type="match status" value="1"/>
</dbReference>
<dbReference type="NCBIfam" id="TIGR00355">
    <property type="entry name" value="purH"/>
    <property type="match status" value="1"/>
</dbReference>
<dbReference type="PANTHER" id="PTHR11692:SF0">
    <property type="entry name" value="BIFUNCTIONAL PURINE BIOSYNTHESIS PROTEIN ATIC"/>
    <property type="match status" value="1"/>
</dbReference>
<dbReference type="PANTHER" id="PTHR11692">
    <property type="entry name" value="BIFUNCTIONAL PURINE BIOSYNTHESIS PROTEIN PURH"/>
    <property type="match status" value="1"/>
</dbReference>
<dbReference type="Pfam" id="PF01808">
    <property type="entry name" value="AICARFT_IMPCHas"/>
    <property type="match status" value="1"/>
</dbReference>
<dbReference type="Pfam" id="PF02142">
    <property type="entry name" value="MGS"/>
    <property type="match status" value="1"/>
</dbReference>
<dbReference type="PIRSF" id="PIRSF000414">
    <property type="entry name" value="AICARFT_IMPCHas"/>
    <property type="match status" value="1"/>
</dbReference>
<dbReference type="SMART" id="SM00798">
    <property type="entry name" value="AICARFT_IMPCHas"/>
    <property type="match status" value="1"/>
</dbReference>
<dbReference type="SMART" id="SM00851">
    <property type="entry name" value="MGS"/>
    <property type="match status" value="1"/>
</dbReference>
<dbReference type="SUPFAM" id="SSF53927">
    <property type="entry name" value="Cytidine deaminase-like"/>
    <property type="match status" value="1"/>
</dbReference>
<dbReference type="SUPFAM" id="SSF52335">
    <property type="entry name" value="Methylglyoxal synthase-like"/>
    <property type="match status" value="1"/>
</dbReference>
<dbReference type="PROSITE" id="PS51855">
    <property type="entry name" value="MGS"/>
    <property type="match status" value="1"/>
</dbReference>
<keyword id="KW-0378">Hydrolase</keyword>
<keyword id="KW-0511">Multifunctional enzyme</keyword>
<keyword id="KW-0658">Purine biosynthesis</keyword>
<keyword id="KW-0808">Transferase</keyword>